<keyword id="KW-0131">Cell cycle</keyword>
<keyword id="KW-0132">Cell division</keyword>
<sequence>MSARQIYYSDKYFDEDFEYRHVMLPKDIAKMVPKNHLMSEAEWRSIGVQQSHGWIHYMKHEPEPHILLFRRKVTGQ</sequence>
<accession>P41384</accession>
<proteinExistence type="inferred from homology"/>
<protein>
    <recommendedName>
        <fullName>Cyclin-dependent kinases regulatory subunit</fullName>
    </recommendedName>
    <alternativeName>
        <fullName>SUC1 homolog</fullName>
    </alternativeName>
</protein>
<organism>
    <name type="scientific">Patella vulgata</name>
    <name type="common">Common limpet</name>
    <dbReference type="NCBI Taxonomy" id="6465"/>
    <lineage>
        <taxon>Eukaryota</taxon>
        <taxon>Metazoa</taxon>
        <taxon>Spiralia</taxon>
        <taxon>Lophotrochozoa</taxon>
        <taxon>Mollusca</taxon>
        <taxon>Gastropoda</taxon>
        <taxon>Patellogastropoda</taxon>
        <taxon>Patelloidea</taxon>
        <taxon>Patellidae</taxon>
        <taxon>Patella</taxon>
    </lineage>
</organism>
<comment type="function">
    <text>Binds to the catalytic subunit of the cyclin dependent kinases and is essential for their biological function.</text>
</comment>
<comment type="subunit">
    <text evidence="1">Forms a homohexamer that can probably bind six kinase subunits.</text>
</comment>
<comment type="similarity">
    <text evidence="2">Belongs to the CKS family.</text>
</comment>
<evidence type="ECO:0000250" key="1"/>
<evidence type="ECO:0000305" key="2"/>
<name>CKS1_PATVU</name>
<reference key="1">
    <citation type="journal article" date="1993" name="Int. J. Dev. Biol.">
        <title>Microinjection of suc1 transcripts delays the cell cycle clock in Patella vulgata embryos.</title>
        <authorList>
            <person name="Colas P."/>
            <person name="Serras F."/>
            <person name="van Loon A.E."/>
        </authorList>
    </citation>
    <scope>NUCLEOTIDE SEQUENCE [MRNA]</scope>
</reference>
<feature type="chain" id="PRO_0000206240" description="Cyclin-dependent kinases regulatory subunit">
    <location>
        <begin position="1"/>
        <end position="76"/>
    </location>
</feature>
<dbReference type="EMBL" id="Z28352">
    <property type="protein sequence ID" value="CAA82207.1"/>
    <property type="molecule type" value="mRNA"/>
</dbReference>
<dbReference type="PIR" id="S42789">
    <property type="entry name" value="S42789"/>
</dbReference>
<dbReference type="SMR" id="P41384"/>
<dbReference type="GO" id="GO:0016538">
    <property type="term" value="F:cyclin-dependent protein serine/threonine kinase regulator activity"/>
    <property type="evidence" value="ECO:0007669"/>
    <property type="project" value="InterPro"/>
</dbReference>
<dbReference type="GO" id="GO:0051301">
    <property type="term" value="P:cell division"/>
    <property type="evidence" value="ECO:0007669"/>
    <property type="project" value="UniProtKB-KW"/>
</dbReference>
<dbReference type="FunFam" id="3.30.170.10:FF:000001">
    <property type="entry name" value="Cyclin-dependent kinases regulatory subunit"/>
    <property type="match status" value="1"/>
</dbReference>
<dbReference type="Gene3D" id="3.30.170.10">
    <property type="entry name" value="Cyclin-dependent kinase, regulatory subunit"/>
    <property type="match status" value="1"/>
</dbReference>
<dbReference type="InterPro" id="IPR000789">
    <property type="entry name" value="Cyclin-dep_kinase_reg-sub"/>
</dbReference>
<dbReference type="InterPro" id="IPR036858">
    <property type="entry name" value="Cyclin-dep_kinase_reg-sub_sf"/>
</dbReference>
<dbReference type="PANTHER" id="PTHR23415">
    <property type="entry name" value="CYCLIN-DEPENDENT KINASES REGULATORY SUBUNIT/60S RIBOSOME SUBUNIT BIOGENESIS PROTEIN NIP7"/>
    <property type="match status" value="1"/>
</dbReference>
<dbReference type="Pfam" id="PF01111">
    <property type="entry name" value="CKS"/>
    <property type="match status" value="1"/>
</dbReference>
<dbReference type="PRINTS" id="PR00296">
    <property type="entry name" value="CYCLINKINASE"/>
</dbReference>
<dbReference type="SMART" id="SM01084">
    <property type="entry name" value="CKS"/>
    <property type="match status" value="1"/>
</dbReference>
<dbReference type="SUPFAM" id="SSF55637">
    <property type="entry name" value="Cell cycle regulatory proteins"/>
    <property type="match status" value="1"/>
</dbReference>
<dbReference type="PROSITE" id="PS00944">
    <property type="entry name" value="CKS_1"/>
    <property type="match status" value="1"/>
</dbReference>
<dbReference type="PROSITE" id="PS00945">
    <property type="entry name" value="CKS_2"/>
    <property type="match status" value="1"/>
</dbReference>